<reference key="1">
    <citation type="journal article" date="2004" name="J. Bacteriol.">
        <title>Complete genome sequence of Rickettsia typhi and comparison with sequences of other Rickettsiae.</title>
        <authorList>
            <person name="McLeod M.P."/>
            <person name="Qin X."/>
            <person name="Karpathy S.E."/>
            <person name="Gioia J."/>
            <person name="Highlander S.K."/>
            <person name="Fox G.E."/>
            <person name="McNeill T.Z."/>
            <person name="Jiang H."/>
            <person name="Muzny D."/>
            <person name="Jacob L.S."/>
            <person name="Hawes A.C."/>
            <person name="Sodergren E."/>
            <person name="Gill R."/>
            <person name="Hume J."/>
            <person name="Morgan M."/>
            <person name="Fan G."/>
            <person name="Amin A.G."/>
            <person name="Gibbs R.A."/>
            <person name="Hong C."/>
            <person name="Yu X.-J."/>
            <person name="Walker D.H."/>
            <person name="Weinstock G.M."/>
        </authorList>
    </citation>
    <scope>NUCLEOTIDE SEQUENCE [LARGE SCALE GENOMIC DNA]</scope>
    <source>
        <strain>ATCC VR-144 / Wilmington</strain>
    </source>
</reference>
<organism>
    <name type="scientific">Rickettsia typhi (strain ATCC VR-144 / Wilmington)</name>
    <dbReference type="NCBI Taxonomy" id="257363"/>
    <lineage>
        <taxon>Bacteria</taxon>
        <taxon>Pseudomonadati</taxon>
        <taxon>Pseudomonadota</taxon>
        <taxon>Alphaproteobacteria</taxon>
        <taxon>Rickettsiales</taxon>
        <taxon>Rickettsiaceae</taxon>
        <taxon>Rickettsieae</taxon>
        <taxon>Rickettsia</taxon>
        <taxon>typhus group</taxon>
    </lineage>
</organism>
<name>DNAJ_RICTY</name>
<proteinExistence type="inferred from homology"/>
<sequence length="370" mass="41145">MSQDYYQVLGVSKTASQADIKKAYLKLAKQYHPDTTNAHDAEKKFKEINAAYDVLKDEQKRAAYDRFGHDAFQNQQARGGGNNSGFHHDINDIFGDFFSDFMGSGRRKQTSSKIRGSDLKYDLTIKLEEAFHGIEKNISFSSEVKCDACHGTGSEKGETVTTCDSCGGVGVTRIQQGFFTLEQTCHKCQGNGQIIKNPCKKCHGMGRYHKQRNLSINIPAGVENGTRIRHSGEGEAGIRGGNNGDLYVDIAIKPHDIYKIDGANLHCKLPISFVHAALGGEIEVPVIEGGKVKLTIPAGTQNGDQLRLRSKGMSKIRSTIRGDMLTHIHVEVPKNLSKRQRELLEEFKKESINEKENDSSFFNKMKSMWS</sequence>
<accession>Q68XI3</accession>
<comment type="function">
    <text evidence="1">Participates actively in the response to hyperosmotic and heat shock by preventing the aggregation of stress-denatured proteins and by disaggregating proteins, also in an autonomous, DnaK-independent fashion. Unfolded proteins bind initially to DnaJ; upon interaction with the DnaJ-bound protein, DnaK hydrolyzes its bound ATP, resulting in the formation of a stable complex. GrpE releases ADP from DnaK; ATP binding to DnaK triggers the release of the substrate protein, thus completing the reaction cycle. Several rounds of ATP-dependent interactions between DnaJ, DnaK and GrpE are required for fully efficient folding. Also involved, together with DnaK and GrpE, in the DNA replication of plasmids through activation of initiation proteins.</text>
</comment>
<comment type="cofactor">
    <cofactor evidence="1">
        <name>Zn(2+)</name>
        <dbReference type="ChEBI" id="CHEBI:29105"/>
    </cofactor>
    <text evidence="1">Binds 2 Zn(2+) ions per monomer.</text>
</comment>
<comment type="subunit">
    <text evidence="1">Homodimer.</text>
</comment>
<comment type="subcellular location">
    <subcellularLocation>
        <location evidence="1">Cytoplasm</location>
    </subcellularLocation>
</comment>
<comment type="domain">
    <text evidence="1">The J domain is necessary and sufficient to stimulate DnaK ATPase activity. Zinc center 1 plays an important role in the autonomous, DnaK-independent chaperone activity of DnaJ. Zinc center 2 is essential for interaction with DnaK and for DnaJ activity.</text>
</comment>
<comment type="similarity">
    <text evidence="1">Belongs to the DnaJ family.</text>
</comment>
<gene>
    <name evidence="1" type="primary">dnaJ</name>
    <name type="ordered locus">RT0175</name>
</gene>
<dbReference type="EMBL" id="AE017197">
    <property type="protein sequence ID" value="AAU03659.1"/>
    <property type="molecule type" value="Genomic_DNA"/>
</dbReference>
<dbReference type="RefSeq" id="WP_011190646.1">
    <property type="nucleotide sequence ID" value="NC_006142.1"/>
</dbReference>
<dbReference type="SMR" id="Q68XI3"/>
<dbReference type="KEGG" id="rty:RT0175"/>
<dbReference type="eggNOG" id="COG0484">
    <property type="taxonomic scope" value="Bacteria"/>
</dbReference>
<dbReference type="HOGENOM" id="CLU_017633_0_7_5"/>
<dbReference type="OrthoDB" id="9779889at2"/>
<dbReference type="Proteomes" id="UP000000604">
    <property type="component" value="Chromosome"/>
</dbReference>
<dbReference type="GO" id="GO:0005737">
    <property type="term" value="C:cytoplasm"/>
    <property type="evidence" value="ECO:0007669"/>
    <property type="project" value="UniProtKB-SubCell"/>
</dbReference>
<dbReference type="GO" id="GO:0005524">
    <property type="term" value="F:ATP binding"/>
    <property type="evidence" value="ECO:0007669"/>
    <property type="project" value="InterPro"/>
</dbReference>
<dbReference type="GO" id="GO:0031072">
    <property type="term" value="F:heat shock protein binding"/>
    <property type="evidence" value="ECO:0007669"/>
    <property type="project" value="InterPro"/>
</dbReference>
<dbReference type="GO" id="GO:0051082">
    <property type="term" value="F:unfolded protein binding"/>
    <property type="evidence" value="ECO:0007669"/>
    <property type="project" value="UniProtKB-UniRule"/>
</dbReference>
<dbReference type="GO" id="GO:0008270">
    <property type="term" value="F:zinc ion binding"/>
    <property type="evidence" value="ECO:0007669"/>
    <property type="project" value="UniProtKB-UniRule"/>
</dbReference>
<dbReference type="GO" id="GO:0051085">
    <property type="term" value="P:chaperone cofactor-dependent protein refolding"/>
    <property type="evidence" value="ECO:0007669"/>
    <property type="project" value="TreeGrafter"/>
</dbReference>
<dbReference type="GO" id="GO:0006260">
    <property type="term" value="P:DNA replication"/>
    <property type="evidence" value="ECO:0007669"/>
    <property type="project" value="UniProtKB-KW"/>
</dbReference>
<dbReference type="GO" id="GO:0042026">
    <property type="term" value="P:protein refolding"/>
    <property type="evidence" value="ECO:0007669"/>
    <property type="project" value="TreeGrafter"/>
</dbReference>
<dbReference type="GO" id="GO:0009408">
    <property type="term" value="P:response to heat"/>
    <property type="evidence" value="ECO:0007669"/>
    <property type="project" value="InterPro"/>
</dbReference>
<dbReference type="CDD" id="cd06257">
    <property type="entry name" value="DnaJ"/>
    <property type="match status" value="1"/>
</dbReference>
<dbReference type="CDD" id="cd10747">
    <property type="entry name" value="DnaJ_C"/>
    <property type="match status" value="1"/>
</dbReference>
<dbReference type="CDD" id="cd10719">
    <property type="entry name" value="DnaJ_zf"/>
    <property type="match status" value="1"/>
</dbReference>
<dbReference type="FunFam" id="1.10.287.110:FF:000153">
    <property type="entry name" value="Chaperone protein DnaJ"/>
    <property type="match status" value="1"/>
</dbReference>
<dbReference type="FunFam" id="2.10.230.10:FF:000002">
    <property type="entry name" value="Molecular chaperone DnaJ"/>
    <property type="match status" value="1"/>
</dbReference>
<dbReference type="FunFam" id="2.60.260.20:FF:000004">
    <property type="entry name" value="Molecular chaperone DnaJ"/>
    <property type="match status" value="1"/>
</dbReference>
<dbReference type="Gene3D" id="1.10.287.110">
    <property type="entry name" value="DnaJ domain"/>
    <property type="match status" value="1"/>
</dbReference>
<dbReference type="Gene3D" id="2.10.230.10">
    <property type="entry name" value="Heat shock protein DnaJ, cysteine-rich domain"/>
    <property type="match status" value="1"/>
</dbReference>
<dbReference type="Gene3D" id="2.60.260.20">
    <property type="entry name" value="Urease metallochaperone UreE, N-terminal domain"/>
    <property type="match status" value="2"/>
</dbReference>
<dbReference type="HAMAP" id="MF_01152">
    <property type="entry name" value="DnaJ"/>
    <property type="match status" value="1"/>
</dbReference>
<dbReference type="InterPro" id="IPR012724">
    <property type="entry name" value="DnaJ"/>
</dbReference>
<dbReference type="InterPro" id="IPR002939">
    <property type="entry name" value="DnaJ_C"/>
</dbReference>
<dbReference type="InterPro" id="IPR001623">
    <property type="entry name" value="DnaJ_domain"/>
</dbReference>
<dbReference type="InterPro" id="IPR018253">
    <property type="entry name" value="DnaJ_domain_CS"/>
</dbReference>
<dbReference type="InterPro" id="IPR008971">
    <property type="entry name" value="HSP40/DnaJ_pept-bd"/>
</dbReference>
<dbReference type="InterPro" id="IPR001305">
    <property type="entry name" value="HSP_DnaJ_Cys-rich_dom"/>
</dbReference>
<dbReference type="InterPro" id="IPR036410">
    <property type="entry name" value="HSP_DnaJ_Cys-rich_dom_sf"/>
</dbReference>
<dbReference type="InterPro" id="IPR036869">
    <property type="entry name" value="J_dom_sf"/>
</dbReference>
<dbReference type="NCBIfam" id="TIGR02349">
    <property type="entry name" value="DnaJ_bact"/>
    <property type="match status" value="1"/>
</dbReference>
<dbReference type="NCBIfam" id="NF008035">
    <property type="entry name" value="PRK10767.1"/>
    <property type="match status" value="1"/>
</dbReference>
<dbReference type="NCBIfam" id="NF010893">
    <property type="entry name" value="PRK14300.1"/>
    <property type="match status" value="1"/>
</dbReference>
<dbReference type="PANTHER" id="PTHR43096">
    <property type="entry name" value="DNAJ HOMOLOG 1, MITOCHONDRIAL-RELATED"/>
    <property type="match status" value="1"/>
</dbReference>
<dbReference type="PANTHER" id="PTHR43096:SF52">
    <property type="entry name" value="DNAJ HOMOLOG 1, MITOCHONDRIAL-RELATED"/>
    <property type="match status" value="1"/>
</dbReference>
<dbReference type="Pfam" id="PF00226">
    <property type="entry name" value="DnaJ"/>
    <property type="match status" value="1"/>
</dbReference>
<dbReference type="Pfam" id="PF01556">
    <property type="entry name" value="DnaJ_C"/>
    <property type="match status" value="1"/>
</dbReference>
<dbReference type="Pfam" id="PF00684">
    <property type="entry name" value="DnaJ_CXXCXGXG"/>
    <property type="match status" value="1"/>
</dbReference>
<dbReference type="PRINTS" id="PR00625">
    <property type="entry name" value="JDOMAIN"/>
</dbReference>
<dbReference type="SMART" id="SM00271">
    <property type="entry name" value="DnaJ"/>
    <property type="match status" value="1"/>
</dbReference>
<dbReference type="SUPFAM" id="SSF46565">
    <property type="entry name" value="Chaperone J-domain"/>
    <property type="match status" value="1"/>
</dbReference>
<dbReference type="SUPFAM" id="SSF57938">
    <property type="entry name" value="DnaJ/Hsp40 cysteine-rich domain"/>
    <property type="match status" value="1"/>
</dbReference>
<dbReference type="SUPFAM" id="SSF49493">
    <property type="entry name" value="HSP40/DnaJ peptide-binding domain"/>
    <property type="match status" value="2"/>
</dbReference>
<dbReference type="PROSITE" id="PS00636">
    <property type="entry name" value="DNAJ_1"/>
    <property type="match status" value="1"/>
</dbReference>
<dbReference type="PROSITE" id="PS50076">
    <property type="entry name" value="DNAJ_2"/>
    <property type="match status" value="1"/>
</dbReference>
<dbReference type="PROSITE" id="PS51188">
    <property type="entry name" value="ZF_CR"/>
    <property type="match status" value="1"/>
</dbReference>
<protein>
    <recommendedName>
        <fullName evidence="1">Chaperone protein DnaJ</fullName>
    </recommendedName>
</protein>
<feature type="chain" id="PRO_0000070874" description="Chaperone protein DnaJ">
    <location>
        <begin position="1"/>
        <end position="370"/>
    </location>
</feature>
<feature type="domain" description="J" evidence="1">
    <location>
        <begin position="4"/>
        <end position="68"/>
    </location>
</feature>
<feature type="repeat" description="CXXCXGXG motif">
    <location>
        <begin position="146"/>
        <end position="153"/>
    </location>
</feature>
<feature type="repeat" description="CXXCXGXG motif">
    <location>
        <begin position="163"/>
        <end position="170"/>
    </location>
</feature>
<feature type="repeat" description="CXXCXGXG motif">
    <location>
        <begin position="185"/>
        <end position="192"/>
    </location>
</feature>
<feature type="repeat" description="CXXCXGXG motif">
    <location>
        <begin position="199"/>
        <end position="206"/>
    </location>
</feature>
<feature type="zinc finger region" description="CR-type" evidence="1">
    <location>
        <begin position="133"/>
        <end position="211"/>
    </location>
</feature>
<feature type="binding site" evidence="1">
    <location>
        <position position="146"/>
    </location>
    <ligand>
        <name>Zn(2+)</name>
        <dbReference type="ChEBI" id="CHEBI:29105"/>
        <label>1</label>
    </ligand>
</feature>
<feature type="binding site" evidence="1">
    <location>
        <position position="149"/>
    </location>
    <ligand>
        <name>Zn(2+)</name>
        <dbReference type="ChEBI" id="CHEBI:29105"/>
        <label>1</label>
    </ligand>
</feature>
<feature type="binding site" evidence="1">
    <location>
        <position position="163"/>
    </location>
    <ligand>
        <name>Zn(2+)</name>
        <dbReference type="ChEBI" id="CHEBI:29105"/>
        <label>2</label>
    </ligand>
</feature>
<feature type="binding site" evidence="1">
    <location>
        <position position="166"/>
    </location>
    <ligand>
        <name>Zn(2+)</name>
        <dbReference type="ChEBI" id="CHEBI:29105"/>
        <label>2</label>
    </ligand>
</feature>
<feature type="binding site" evidence="1">
    <location>
        <position position="185"/>
    </location>
    <ligand>
        <name>Zn(2+)</name>
        <dbReference type="ChEBI" id="CHEBI:29105"/>
        <label>2</label>
    </ligand>
</feature>
<feature type="binding site" evidence="1">
    <location>
        <position position="188"/>
    </location>
    <ligand>
        <name>Zn(2+)</name>
        <dbReference type="ChEBI" id="CHEBI:29105"/>
        <label>2</label>
    </ligand>
</feature>
<feature type="binding site" evidence="1">
    <location>
        <position position="199"/>
    </location>
    <ligand>
        <name>Zn(2+)</name>
        <dbReference type="ChEBI" id="CHEBI:29105"/>
        <label>1</label>
    </ligand>
</feature>
<feature type="binding site" evidence="1">
    <location>
        <position position="202"/>
    </location>
    <ligand>
        <name>Zn(2+)</name>
        <dbReference type="ChEBI" id="CHEBI:29105"/>
        <label>1</label>
    </ligand>
</feature>
<keyword id="KW-0143">Chaperone</keyword>
<keyword id="KW-0963">Cytoplasm</keyword>
<keyword id="KW-0235">DNA replication</keyword>
<keyword id="KW-0479">Metal-binding</keyword>
<keyword id="KW-0677">Repeat</keyword>
<keyword id="KW-0346">Stress response</keyword>
<keyword id="KW-0862">Zinc</keyword>
<keyword id="KW-0863">Zinc-finger</keyword>
<evidence type="ECO:0000255" key="1">
    <source>
        <dbReference type="HAMAP-Rule" id="MF_01152"/>
    </source>
</evidence>